<sequence>MQKIRLKLKAYDHRVLDRTVAAIVEAVKRTGADVRGPVPMPTKVKRYTVLKSPHINKDSREQFEMKIHGRMLDIVAATPETVDSLTKLDLAPEVNVEVRAMGK</sequence>
<keyword id="KW-1185">Reference proteome</keyword>
<keyword id="KW-0687">Ribonucleoprotein</keyword>
<keyword id="KW-0689">Ribosomal protein</keyword>
<evidence type="ECO:0000255" key="1">
    <source>
        <dbReference type="HAMAP-Rule" id="MF_00508"/>
    </source>
</evidence>
<evidence type="ECO:0000305" key="2"/>
<gene>
    <name evidence="1" type="primary">rpsJ</name>
    <name type="ordered locus">CHAB381_0083</name>
</gene>
<feature type="chain" id="PRO_1000015005" description="Small ribosomal subunit protein uS10">
    <location>
        <begin position="1"/>
        <end position="103"/>
    </location>
</feature>
<accession>A7HZK5</accession>
<organism>
    <name type="scientific">Campylobacter hominis (strain ATCC BAA-381 / DSM 21671 / CCUG 45161 / LMG 19568 / NCTC 13146 / CH001A)</name>
    <dbReference type="NCBI Taxonomy" id="360107"/>
    <lineage>
        <taxon>Bacteria</taxon>
        <taxon>Pseudomonadati</taxon>
        <taxon>Campylobacterota</taxon>
        <taxon>Epsilonproteobacteria</taxon>
        <taxon>Campylobacterales</taxon>
        <taxon>Campylobacteraceae</taxon>
        <taxon>Campylobacter</taxon>
    </lineage>
</organism>
<reference key="1">
    <citation type="submission" date="2007-07" db="EMBL/GenBank/DDBJ databases">
        <title>Complete genome sequence of Campylobacter hominis ATCC BAA-381, a commensal isolated from the human gastrointestinal tract.</title>
        <authorList>
            <person name="Fouts D.E."/>
            <person name="Mongodin E.F."/>
            <person name="Puiu D."/>
            <person name="Sebastian Y."/>
            <person name="Miller W.G."/>
            <person name="Mandrell R.E."/>
            <person name="Nelson K.E."/>
        </authorList>
    </citation>
    <scope>NUCLEOTIDE SEQUENCE [LARGE SCALE GENOMIC DNA]</scope>
    <source>
        <strain>ATCC BAA-381 / DSM 21671 / CCUG 45161 / LMG 19568 / NCTC 13146 / CH001A</strain>
    </source>
</reference>
<protein>
    <recommendedName>
        <fullName evidence="1">Small ribosomal subunit protein uS10</fullName>
    </recommendedName>
    <alternativeName>
        <fullName evidence="2">30S ribosomal protein S10</fullName>
    </alternativeName>
</protein>
<comment type="function">
    <text evidence="1">Involved in the binding of tRNA to the ribosomes.</text>
</comment>
<comment type="subunit">
    <text evidence="1">Part of the 30S ribosomal subunit.</text>
</comment>
<comment type="similarity">
    <text evidence="1">Belongs to the universal ribosomal protein uS10 family.</text>
</comment>
<dbReference type="EMBL" id="CP000776">
    <property type="protein sequence ID" value="ABS51268.1"/>
    <property type="molecule type" value="Genomic_DNA"/>
</dbReference>
<dbReference type="RefSeq" id="WP_011991543.1">
    <property type="nucleotide sequence ID" value="NC_009714.1"/>
</dbReference>
<dbReference type="SMR" id="A7HZK5"/>
<dbReference type="STRING" id="360107.CHAB381_0083"/>
<dbReference type="KEGG" id="cha:CHAB381_0083"/>
<dbReference type="eggNOG" id="COG0051">
    <property type="taxonomic scope" value="Bacteria"/>
</dbReference>
<dbReference type="HOGENOM" id="CLU_122625_1_2_7"/>
<dbReference type="OrthoDB" id="9804464at2"/>
<dbReference type="Proteomes" id="UP000002407">
    <property type="component" value="Chromosome"/>
</dbReference>
<dbReference type="GO" id="GO:1990904">
    <property type="term" value="C:ribonucleoprotein complex"/>
    <property type="evidence" value="ECO:0007669"/>
    <property type="project" value="UniProtKB-KW"/>
</dbReference>
<dbReference type="GO" id="GO:0005840">
    <property type="term" value="C:ribosome"/>
    <property type="evidence" value="ECO:0007669"/>
    <property type="project" value="UniProtKB-KW"/>
</dbReference>
<dbReference type="GO" id="GO:0003735">
    <property type="term" value="F:structural constituent of ribosome"/>
    <property type="evidence" value="ECO:0007669"/>
    <property type="project" value="InterPro"/>
</dbReference>
<dbReference type="GO" id="GO:0000049">
    <property type="term" value="F:tRNA binding"/>
    <property type="evidence" value="ECO:0007669"/>
    <property type="project" value="UniProtKB-UniRule"/>
</dbReference>
<dbReference type="GO" id="GO:0006412">
    <property type="term" value="P:translation"/>
    <property type="evidence" value="ECO:0007669"/>
    <property type="project" value="UniProtKB-UniRule"/>
</dbReference>
<dbReference type="FunFam" id="3.30.70.600:FF:000003">
    <property type="entry name" value="30S ribosomal protein S10"/>
    <property type="match status" value="1"/>
</dbReference>
<dbReference type="Gene3D" id="3.30.70.600">
    <property type="entry name" value="Ribosomal protein S10 domain"/>
    <property type="match status" value="1"/>
</dbReference>
<dbReference type="HAMAP" id="MF_00508">
    <property type="entry name" value="Ribosomal_uS10"/>
    <property type="match status" value="1"/>
</dbReference>
<dbReference type="InterPro" id="IPR001848">
    <property type="entry name" value="Ribosomal_uS10"/>
</dbReference>
<dbReference type="InterPro" id="IPR018268">
    <property type="entry name" value="Ribosomal_uS10_CS"/>
</dbReference>
<dbReference type="InterPro" id="IPR027486">
    <property type="entry name" value="Ribosomal_uS10_dom"/>
</dbReference>
<dbReference type="InterPro" id="IPR036838">
    <property type="entry name" value="Ribosomal_uS10_dom_sf"/>
</dbReference>
<dbReference type="NCBIfam" id="NF001861">
    <property type="entry name" value="PRK00596.1"/>
    <property type="match status" value="1"/>
</dbReference>
<dbReference type="NCBIfam" id="TIGR01049">
    <property type="entry name" value="rpsJ_bact"/>
    <property type="match status" value="1"/>
</dbReference>
<dbReference type="PANTHER" id="PTHR11700">
    <property type="entry name" value="30S RIBOSOMAL PROTEIN S10 FAMILY MEMBER"/>
    <property type="match status" value="1"/>
</dbReference>
<dbReference type="Pfam" id="PF00338">
    <property type="entry name" value="Ribosomal_S10"/>
    <property type="match status" value="1"/>
</dbReference>
<dbReference type="PRINTS" id="PR00971">
    <property type="entry name" value="RIBOSOMALS10"/>
</dbReference>
<dbReference type="SMART" id="SM01403">
    <property type="entry name" value="Ribosomal_S10"/>
    <property type="match status" value="1"/>
</dbReference>
<dbReference type="SUPFAM" id="SSF54999">
    <property type="entry name" value="Ribosomal protein S10"/>
    <property type="match status" value="1"/>
</dbReference>
<dbReference type="PROSITE" id="PS00361">
    <property type="entry name" value="RIBOSOMAL_S10"/>
    <property type="match status" value="1"/>
</dbReference>
<name>RS10_CAMHC</name>
<proteinExistence type="inferred from homology"/>